<protein>
    <recommendedName>
        <fullName>Chlorophyllase type 1</fullName>
        <ecNumber>3.1.1.14</ecNumber>
    </recommendedName>
    <alternativeName>
        <fullName>CaCLH1</fullName>
    </alternativeName>
    <alternativeName>
        <fullName>Chlorophyll-chlorophyllido hydrolase 1</fullName>
        <shortName>Chlase 1</shortName>
    </alternativeName>
</protein>
<name>CLH1_CHEAL</name>
<keyword id="KW-0881">Chlorophyll catabolism</keyword>
<keyword id="KW-0903">Direct protein sequencing</keyword>
<keyword id="KW-0378">Hydrolase</keyword>
<organism>
    <name type="scientific">Chenopodium album</name>
    <name type="common">Fat hen</name>
    <dbReference type="NCBI Taxonomy" id="3559"/>
    <lineage>
        <taxon>Eukaryota</taxon>
        <taxon>Viridiplantae</taxon>
        <taxon>Streptophyta</taxon>
        <taxon>Embryophyta</taxon>
        <taxon>Tracheophyta</taxon>
        <taxon>Spermatophyta</taxon>
        <taxon>Magnoliopsida</taxon>
        <taxon>eudicotyledons</taxon>
        <taxon>Gunneridae</taxon>
        <taxon>Pentapetalae</taxon>
        <taxon>Caryophyllales</taxon>
        <taxon>Chenopodiaceae</taxon>
        <taxon>Chenopodioideae</taxon>
        <taxon>Atripliceae</taxon>
        <taxon>Chenopodium</taxon>
    </lineage>
</organism>
<comment type="function">
    <text>Catalyzes the hydrolysis of ester bond in chlorophyll to yield chlorophyllide and phytol.</text>
</comment>
<comment type="catalytic activity">
    <reaction>
        <text>a chlorophyll + H2O = a chlorophyllide + phytol + H(+)</text>
        <dbReference type="Rhea" id="RHEA:19605"/>
        <dbReference type="ChEBI" id="CHEBI:15377"/>
        <dbReference type="ChEBI" id="CHEBI:15378"/>
        <dbReference type="ChEBI" id="CHEBI:17327"/>
        <dbReference type="ChEBI" id="CHEBI:139291"/>
        <dbReference type="ChEBI" id="CHEBI:139292"/>
        <dbReference type="EC" id="3.1.1.14"/>
    </reaction>
</comment>
<comment type="biophysicochemical properties">
    <kinetics>
        <KM>4 uM for chlorophyll a</KM>
        <KM>3.1 uM for chlorophyll b</KM>
    </kinetics>
    <phDependence>
        <text>Optimum pH is 6.6-8.6 for chlorophyll a hydrolysis, and 6.6-7.6 for chlorophyll b hydrolysis.</text>
    </phDependence>
</comment>
<comment type="pathway">
    <text>Porphyrin-containing compound metabolism; chlorophyll degradation.</text>
</comment>
<comment type="similarity">
    <text evidence="1">Belongs to the AB hydrolase superfamily. Lipase family.</text>
</comment>
<evidence type="ECO:0000305" key="1"/>
<dbReference type="EC" id="3.1.1.14"/>
<dbReference type="UniPathway" id="UPA00674"/>
<dbReference type="GO" id="GO:0047746">
    <property type="term" value="F:chlorophyllase activity"/>
    <property type="evidence" value="ECO:0007669"/>
    <property type="project" value="UniProtKB-EC"/>
</dbReference>
<dbReference type="GO" id="GO:0015996">
    <property type="term" value="P:chlorophyll catabolic process"/>
    <property type="evidence" value="ECO:0007669"/>
    <property type="project" value="UniProtKB-UniPathway"/>
</dbReference>
<reference key="1">
    <citation type="journal article" date="1997" name="Plant Cell Physiol.">
        <title>Purification and characterization of two isozymes of chlorophyllase from mature leaves of Chenopodium album.</title>
        <authorList>
            <person name="Tsuchiya T."/>
            <person name="Ohta H."/>
            <person name="Masuda T."/>
            <person name="Mikami B."/>
            <person name="Kita N."/>
            <person name="Shioi Y."/>
            <person name="Takamiya K."/>
        </authorList>
    </citation>
    <scope>PROTEIN SEQUENCE</scope>
    <scope>CHARACTERIZATION</scope>
</reference>
<proteinExistence type="evidence at protein level"/>
<accession>P59677</accession>
<sequence>SEKITVFQKGNFQVTEXSSHFV</sequence>
<feature type="chain" id="PRO_0000090387" description="Chlorophyllase type 1">
    <location>
        <begin position="1"/>
        <end position="22" status="greater than"/>
    </location>
</feature>
<feature type="unsure residue">
    <location>
        <position position="17"/>
    </location>
</feature>
<feature type="non-consecutive residues" evidence="1">
    <location>
        <begin position="15"/>
        <end position="16"/>
    </location>
</feature>
<feature type="non-terminal residue">
    <location>
        <position position="22"/>
    </location>
</feature>